<evidence type="ECO:0000255" key="1">
    <source>
        <dbReference type="HAMAP-Rule" id="MF_01617"/>
    </source>
</evidence>
<dbReference type="EC" id="4.2.1.17" evidence="1"/>
<dbReference type="EC" id="5.1.2.3" evidence="1"/>
<dbReference type="EC" id="1.1.1.35" evidence="1"/>
<dbReference type="EMBL" id="CP001138">
    <property type="protein sequence ID" value="ACH50026.1"/>
    <property type="molecule type" value="Genomic_DNA"/>
</dbReference>
<dbReference type="RefSeq" id="WP_000214145.1">
    <property type="nucleotide sequence ID" value="NC_011149.1"/>
</dbReference>
<dbReference type="SMR" id="B5EZR9"/>
<dbReference type="KEGG" id="sea:SeAg_B2528"/>
<dbReference type="HOGENOM" id="CLU_009834_16_3_6"/>
<dbReference type="UniPathway" id="UPA00659"/>
<dbReference type="Proteomes" id="UP000008819">
    <property type="component" value="Chromosome"/>
</dbReference>
<dbReference type="GO" id="GO:0005737">
    <property type="term" value="C:cytoplasm"/>
    <property type="evidence" value="ECO:0007669"/>
    <property type="project" value="UniProtKB-SubCell"/>
</dbReference>
<dbReference type="GO" id="GO:0008692">
    <property type="term" value="F:3-hydroxybutyryl-CoA epimerase activity"/>
    <property type="evidence" value="ECO:0007669"/>
    <property type="project" value="UniProtKB-UniRule"/>
</dbReference>
<dbReference type="GO" id="GO:0004300">
    <property type="term" value="F:enoyl-CoA hydratase activity"/>
    <property type="evidence" value="ECO:0007669"/>
    <property type="project" value="UniProtKB-UniRule"/>
</dbReference>
<dbReference type="GO" id="GO:0016509">
    <property type="term" value="F:long-chain-3-hydroxyacyl-CoA dehydrogenase activity"/>
    <property type="evidence" value="ECO:0007669"/>
    <property type="project" value="TreeGrafter"/>
</dbReference>
<dbReference type="GO" id="GO:0070403">
    <property type="term" value="F:NAD+ binding"/>
    <property type="evidence" value="ECO:0007669"/>
    <property type="project" value="InterPro"/>
</dbReference>
<dbReference type="GO" id="GO:0006635">
    <property type="term" value="P:fatty acid beta-oxidation"/>
    <property type="evidence" value="ECO:0007669"/>
    <property type="project" value="UniProtKB-UniRule"/>
</dbReference>
<dbReference type="CDD" id="cd06558">
    <property type="entry name" value="crotonase-like"/>
    <property type="match status" value="1"/>
</dbReference>
<dbReference type="FunFam" id="1.10.1040.50:FF:000003">
    <property type="entry name" value="Fatty acid oxidation complex subunit alpha"/>
    <property type="match status" value="1"/>
</dbReference>
<dbReference type="FunFam" id="3.90.226.10:FF:000011">
    <property type="entry name" value="Fatty acid oxidation complex subunit alpha"/>
    <property type="match status" value="1"/>
</dbReference>
<dbReference type="FunFam" id="3.40.50.720:FF:000009">
    <property type="entry name" value="Fatty oxidation complex, alpha subunit"/>
    <property type="match status" value="1"/>
</dbReference>
<dbReference type="Gene3D" id="1.10.1040.50">
    <property type="match status" value="1"/>
</dbReference>
<dbReference type="Gene3D" id="3.90.226.10">
    <property type="entry name" value="2-enoyl-CoA Hydratase, Chain A, domain 1"/>
    <property type="match status" value="1"/>
</dbReference>
<dbReference type="Gene3D" id="3.40.50.720">
    <property type="entry name" value="NAD(P)-binding Rossmann-like Domain"/>
    <property type="match status" value="1"/>
</dbReference>
<dbReference type="HAMAP" id="MF_01617">
    <property type="entry name" value="FadJ"/>
    <property type="match status" value="1"/>
</dbReference>
<dbReference type="InterPro" id="IPR006180">
    <property type="entry name" value="3-OHacyl-CoA_DH_CS"/>
</dbReference>
<dbReference type="InterPro" id="IPR006176">
    <property type="entry name" value="3-OHacyl-CoA_DH_NAD-bd"/>
</dbReference>
<dbReference type="InterPro" id="IPR006108">
    <property type="entry name" value="3HC_DH_C"/>
</dbReference>
<dbReference type="InterPro" id="IPR008927">
    <property type="entry name" value="6-PGluconate_DH-like_C_sf"/>
</dbReference>
<dbReference type="InterPro" id="IPR029045">
    <property type="entry name" value="ClpP/crotonase-like_dom_sf"/>
</dbReference>
<dbReference type="InterPro" id="IPR001753">
    <property type="entry name" value="Enoyl-CoA_hydra/iso"/>
</dbReference>
<dbReference type="InterPro" id="IPR050136">
    <property type="entry name" value="FA_oxidation_alpha_subunit"/>
</dbReference>
<dbReference type="InterPro" id="IPR012802">
    <property type="entry name" value="FadJ"/>
</dbReference>
<dbReference type="InterPro" id="IPR036291">
    <property type="entry name" value="NAD(P)-bd_dom_sf"/>
</dbReference>
<dbReference type="NCBIfam" id="TIGR02440">
    <property type="entry name" value="FadJ"/>
    <property type="match status" value="1"/>
</dbReference>
<dbReference type="NCBIfam" id="NF008363">
    <property type="entry name" value="PRK11154.1"/>
    <property type="match status" value="1"/>
</dbReference>
<dbReference type="PANTHER" id="PTHR43612">
    <property type="entry name" value="TRIFUNCTIONAL ENZYME SUBUNIT ALPHA"/>
    <property type="match status" value="1"/>
</dbReference>
<dbReference type="PANTHER" id="PTHR43612:SF3">
    <property type="entry name" value="TRIFUNCTIONAL ENZYME SUBUNIT ALPHA, MITOCHONDRIAL"/>
    <property type="match status" value="1"/>
</dbReference>
<dbReference type="Pfam" id="PF00725">
    <property type="entry name" value="3HCDH"/>
    <property type="match status" value="1"/>
</dbReference>
<dbReference type="Pfam" id="PF02737">
    <property type="entry name" value="3HCDH_N"/>
    <property type="match status" value="1"/>
</dbReference>
<dbReference type="Pfam" id="PF00378">
    <property type="entry name" value="ECH_1"/>
    <property type="match status" value="1"/>
</dbReference>
<dbReference type="SUPFAM" id="SSF48179">
    <property type="entry name" value="6-phosphogluconate dehydrogenase C-terminal domain-like"/>
    <property type="match status" value="2"/>
</dbReference>
<dbReference type="SUPFAM" id="SSF52096">
    <property type="entry name" value="ClpP/crotonase"/>
    <property type="match status" value="1"/>
</dbReference>
<dbReference type="SUPFAM" id="SSF51735">
    <property type="entry name" value="NAD(P)-binding Rossmann-fold domains"/>
    <property type="match status" value="1"/>
</dbReference>
<dbReference type="PROSITE" id="PS00067">
    <property type="entry name" value="3HCDH"/>
    <property type="match status" value="1"/>
</dbReference>
<name>FADJ_SALA4</name>
<organism>
    <name type="scientific">Salmonella agona (strain SL483)</name>
    <dbReference type="NCBI Taxonomy" id="454166"/>
    <lineage>
        <taxon>Bacteria</taxon>
        <taxon>Pseudomonadati</taxon>
        <taxon>Pseudomonadota</taxon>
        <taxon>Gammaproteobacteria</taxon>
        <taxon>Enterobacterales</taxon>
        <taxon>Enterobacteriaceae</taxon>
        <taxon>Salmonella</taxon>
    </lineage>
</organism>
<keyword id="KW-0963">Cytoplasm</keyword>
<keyword id="KW-0276">Fatty acid metabolism</keyword>
<keyword id="KW-0413">Isomerase</keyword>
<keyword id="KW-0442">Lipid degradation</keyword>
<keyword id="KW-0443">Lipid metabolism</keyword>
<keyword id="KW-0456">Lyase</keyword>
<keyword id="KW-0511">Multifunctional enzyme</keyword>
<keyword id="KW-0520">NAD</keyword>
<keyword id="KW-0560">Oxidoreductase</keyword>
<protein>
    <recommendedName>
        <fullName evidence="1">Fatty acid oxidation complex subunit alpha</fullName>
    </recommendedName>
    <domain>
        <recommendedName>
            <fullName evidence="1">Enoyl-CoA hydratase/3-hydroxybutyryl-CoA epimerase</fullName>
            <ecNumber evidence="1">4.2.1.17</ecNumber>
            <ecNumber evidence="1">5.1.2.3</ecNumber>
        </recommendedName>
    </domain>
    <domain>
        <recommendedName>
            <fullName evidence="1">3-hydroxyacyl-CoA dehydrogenase</fullName>
            <ecNumber evidence="1">1.1.1.35</ecNumber>
        </recommendedName>
    </domain>
</protein>
<feature type="chain" id="PRO_1000185947" description="Fatty acid oxidation complex subunit alpha">
    <location>
        <begin position="1"/>
        <end position="715"/>
    </location>
</feature>
<feature type="region of interest" description="Enoyl-CoA hydratase" evidence="1">
    <location>
        <begin position="1"/>
        <end position="190"/>
    </location>
</feature>
<feature type="region of interest" description="3-hydroxyacyl-CoA dehydrogenase" evidence="1">
    <location>
        <begin position="306"/>
        <end position="715"/>
    </location>
</feature>
<feature type="site" description="Important for catalytic activity" evidence="1">
    <location>
        <position position="118"/>
    </location>
</feature>
<feature type="site" description="Important for catalytic activity" evidence="1">
    <location>
        <position position="140"/>
    </location>
</feature>
<gene>
    <name evidence="1" type="primary">fadJ</name>
    <name type="ordered locus">SeAg_B2528</name>
</gene>
<accession>B5EZR9</accession>
<proteinExistence type="inferred from homology"/>
<sequence>MTTTSAFMLNVRLDNVAVVAIDVPGEKVNTLKAEFAAQVRAILKQIRENKALQGVVFISAKADNFIAGADINMIGHCQNAQEAETLARQGQQLMAEIQALPVPVIAAIHGACLGGGLEMALACHRRICTDDVKTVLGLPEVQLGLLPGSGGTQRLPRLVGVSTALDMILTGKQLRARQALKAGLVDDVVPQTILLEAAVELAKKERLAQRTLPVRERILAGPLGRALLFRLVRKKTAQKTQGNYPATERIIDVIETGLAQGSSSGYDAEARAFGELAMTPQSQALRAVFFASTEVKKDPGSDAPPGPLNSVGILGGGLMGGGIAWVTACKGGLPVRIKDINTQGINHALKYSWDLLETKVRRRHIKASERDKQLALISGSTDYRGFSHRDLVIEAVFEDLPLKQQMVAEVEQNCAAHTIFASNTSSLPIGDIAANAARPEQVIGLHFFSPVEKMPLVEVIPHASTSAQTIATTVKLAKKQGKTPIVVSDKAGFYVNRILAPYINEAIRMLTEGERVEHIDAALVKFGFPVGPIQLLDEVGIDTGTKIIPVLEAAYGERFSAPANVVASILNDDRKGRKNGRGFYLYGEKGRKSKKQVDPAIYKLIGVQGQSRLSAQQVAERCVMLMLNEAARCFDEKVIRSARDGDIGAVFGIGFPPFLGGPFRYMDALGPGEMVATLQRLAALYGPRYAPCEQLVRMAERREHFWTNGETDQGN</sequence>
<reference key="1">
    <citation type="journal article" date="2011" name="J. Bacteriol.">
        <title>Comparative genomics of 28 Salmonella enterica isolates: evidence for CRISPR-mediated adaptive sublineage evolution.</title>
        <authorList>
            <person name="Fricke W.F."/>
            <person name="Mammel M.K."/>
            <person name="McDermott P.F."/>
            <person name="Tartera C."/>
            <person name="White D.G."/>
            <person name="Leclerc J.E."/>
            <person name="Ravel J."/>
            <person name="Cebula T.A."/>
        </authorList>
    </citation>
    <scope>NUCLEOTIDE SEQUENCE [LARGE SCALE GENOMIC DNA]</scope>
    <source>
        <strain>SL483</strain>
    </source>
</reference>
<comment type="function">
    <text evidence="1">Catalyzes the formation of a hydroxyacyl-CoA by addition of water on enoyl-CoA. Also exhibits 3-hydroxyacyl-CoA epimerase and 3-hydroxyacyl-CoA dehydrogenase activities.</text>
</comment>
<comment type="catalytic activity">
    <reaction evidence="1">
        <text>a (3S)-3-hydroxyacyl-CoA = a (2E)-enoyl-CoA + H2O</text>
        <dbReference type="Rhea" id="RHEA:16105"/>
        <dbReference type="ChEBI" id="CHEBI:15377"/>
        <dbReference type="ChEBI" id="CHEBI:57318"/>
        <dbReference type="ChEBI" id="CHEBI:58856"/>
        <dbReference type="EC" id="4.2.1.17"/>
    </reaction>
</comment>
<comment type="catalytic activity">
    <reaction evidence="1">
        <text>a 4-saturated-(3S)-3-hydroxyacyl-CoA = a (3E)-enoyl-CoA + H2O</text>
        <dbReference type="Rhea" id="RHEA:20724"/>
        <dbReference type="ChEBI" id="CHEBI:15377"/>
        <dbReference type="ChEBI" id="CHEBI:58521"/>
        <dbReference type="ChEBI" id="CHEBI:137480"/>
        <dbReference type="EC" id="4.2.1.17"/>
    </reaction>
</comment>
<comment type="catalytic activity">
    <reaction evidence="1">
        <text>a (3S)-3-hydroxyacyl-CoA + NAD(+) = a 3-oxoacyl-CoA + NADH + H(+)</text>
        <dbReference type="Rhea" id="RHEA:22432"/>
        <dbReference type="ChEBI" id="CHEBI:15378"/>
        <dbReference type="ChEBI" id="CHEBI:57318"/>
        <dbReference type="ChEBI" id="CHEBI:57540"/>
        <dbReference type="ChEBI" id="CHEBI:57945"/>
        <dbReference type="ChEBI" id="CHEBI:90726"/>
        <dbReference type="EC" id="1.1.1.35"/>
    </reaction>
</comment>
<comment type="catalytic activity">
    <reaction evidence="1">
        <text>(3S)-3-hydroxybutanoyl-CoA = (3R)-3-hydroxybutanoyl-CoA</text>
        <dbReference type="Rhea" id="RHEA:21760"/>
        <dbReference type="ChEBI" id="CHEBI:57315"/>
        <dbReference type="ChEBI" id="CHEBI:57316"/>
        <dbReference type="EC" id="5.1.2.3"/>
    </reaction>
</comment>
<comment type="pathway">
    <text evidence="1">Lipid metabolism; fatty acid beta-oxidation.</text>
</comment>
<comment type="subunit">
    <text evidence="1">Heterotetramer of two alpha chains (FadJ) and two beta chains (FadI).</text>
</comment>
<comment type="subcellular location">
    <subcellularLocation>
        <location evidence="1">Cytoplasm</location>
    </subcellularLocation>
</comment>
<comment type="similarity">
    <text evidence="1">In the N-terminal section; belongs to the enoyl-CoA hydratase/isomerase family.</text>
</comment>
<comment type="similarity">
    <text evidence="1">In the central section; belongs to the 3-hydroxyacyl-CoA dehydrogenase family.</text>
</comment>